<accession>Q9FZA0</accession>
<keyword id="KW-0002">3D-structure</keyword>
<keyword id="KW-1015">Disulfide bond</keyword>
<keyword id="KW-0372">Hormone</keyword>
<keyword id="KW-1185">Reference proteome</keyword>
<keyword id="KW-0964">Secreted</keyword>
<keyword id="KW-0732">Signal</keyword>
<gene>
    <name type="primary">RALFL4</name>
    <name type="ordered locus">At1g28270</name>
    <name type="ORF">F3H9.8</name>
</gene>
<organism>
    <name type="scientific">Arabidopsis thaliana</name>
    <name type="common">Mouse-ear cress</name>
    <dbReference type="NCBI Taxonomy" id="3702"/>
    <lineage>
        <taxon>Eukaryota</taxon>
        <taxon>Viridiplantae</taxon>
        <taxon>Streptophyta</taxon>
        <taxon>Embryophyta</taxon>
        <taxon>Tracheophyta</taxon>
        <taxon>Spermatophyta</taxon>
        <taxon>Magnoliopsida</taxon>
        <taxon>eudicotyledons</taxon>
        <taxon>Gunneridae</taxon>
        <taxon>Pentapetalae</taxon>
        <taxon>rosids</taxon>
        <taxon>malvids</taxon>
        <taxon>Brassicales</taxon>
        <taxon>Brassicaceae</taxon>
        <taxon>Camelineae</taxon>
        <taxon>Arabidopsis</taxon>
    </lineage>
</organism>
<feature type="signal peptide" evidence="2">
    <location>
        <begin position="1"/>
        <end position="23"/>
    </location>
</feature>
<feature type="propeptide" id="PRO_0000420294" description="Removed in mature form" evidence="1">
    <location>
        <begin position="24"/>
        <end position="58"/>
    </location>
</feature>
<feature type="chain" id="PRO_0000420295" description="Protein RALF-like 4" evidence="1">
    <location>
        <begin position="59"/>
        <end position="110"/>
    </location>
</feature>
<feature type="site" description="Required for proteolytic cleavage" evidence="1">
    <location>
        <begin position="54"/>
        <end position="55"/>
    </location>
</feature>
<feature type="disulfide bond" evidence="1">
    <location>
        <begin position="76"/>
        <end position="86"/>
    </location>
</feature>
<feature type="disulfide bond" evidence="1">
    <location>
        <begin position="99"/>
        <end position="105"/>
    </location>
</feature>
<feature type="helix" evidence="5">
    <location>
        <begin position="64"/>
        <end position="67"/>
    </location>
</feature>
<feature type="strand" evidence="4">
    <location>
        <begin position="70"/>
        <end position="72"/>
    </location>
</feature>
<feature type="helix" evidence="4">
    <location>
        <begin position="83"/>
        <end position="85"/>
    </location>
</feature>
<feature type="helix" evidence="5">
    <location>
        <begin position="102"/>
        <end position="106"/>
    </location>
</feature>
<name>RLF4_ARATH</name>
<comment type="function">
    <text evidence="1">Cell signaling peptide that may regulate plant stress, growth, and development. Mediates a rapid alkalinization of extracellular space by mediating a transient increase in the cytoplasmic Ca(2+) concentration leading to a calcium-dependent signaling events through a cell surface receptor and a concomitant activation of some intracellular mitogen-activated protein kinases (By similarity).</text>
</comment>
<comment type="subcellular location">
    <subcellularLocation>
        <location evidence="1">Secreted</location>
    </subcellularLocation>
</comment>
<comment type="PTM">
    <text evidence="1">Proteolytically cleaved, probably by S1P, a subtilisin-like serine protease (subtilase).</text>
</comment>
<comment type="similarity">
    <text evidence="3">Belongs to the plant rapid alkalinization factor (RALF) family.</text>
</comment>
<sequence>MGVKMLLIFGLLILAMVAKSVNATYPLTKSCINGQGCIGEDDELESLMDSETNRRQLARGRRYIGYDALKKNNVPCSRRGRSYYDCKKRRRNNPYRRGCSAITHCYRYAR</sequence>
<evidence type="ECO:0000250" key="1"/>
<evidence type="ECO:0000255" key="2"/>
<evidence type="ECO:0000305" key="3"/>
<evidence type="ECO:0007829" key="4">
    <source>
        <dbReference type="PDB" id="6QXP"/>
    </source>
</evidence>
<evidence type="ECO:0007829" key="5">
    <source>
        <dbReference type="PDB" id="6TME"/>
    </source>
</evidence>
<protein>
    <recommendedName>
        <fullName>Protein RALF-like 4</fullName>
    </recommendedName>
</protein>
<dbReference type="EMBL" id="AC021044">
    <property type="protein sequence ID" value="AAF98428.1"/>
    <property type="molecule type" value="Genomic_DNA"/>
</dbReference>
<dbReference type="EMBL" id="CP002684">
    <property type="protein sequence ID" value="AEE30939.1"/>
    <property type="molecule type" value="Genomic_DNA"/>
</dbReference>
<dbReference type="EMBL" id="BT005747">
    <property type="protein sequence ID" value="AAO64155.1"/>
    <property type="molecule type" value="mRNA"/>
</dbReference>
<dbReference type="EMBL" id="AK228573">
    <property type="protein sequence ID" value="BAF00491.1"/>
    <property type="molecule type" value="mRNA"/>
</dbReference>
<dbReference type="PIR" id="H86408">
    <property type="entry name" value="H86408"/>
</dbReference>
<dbReference type="RefSeq" id="NP_174148.1">
    <property type="nucleotide sequence ID" value="NM_102592.3"/>
</dbReference>
<dbReference type="PDB" id="6QWN">
    <property type="method" value="X-ray"/>
    <property type="resolution" value="3.89 A"/>
    <property type="chains" value="F/G/H/I/J=54-107"/>
</dbReference>
<dbReference type="PDB" id="6QXP">
    <property type="method" value="X-ray"/>
    <property type="resolution" value="3.20 A"/>
    <property type="chains" value="I/J/K/L/M/N/O/P=54-107"/>
</dbReference>
<dbReference type="PDB" id="6TME">
    <property type="method" value="X-ray"/>
    <property type="resolution" value="2.33 A"/>
    <property type="chains" value="C/D=58-107"/>
</dbReference>
<dbReference type="PDBsum" id="6QWN"/>
<dbReference type="PDBsum" id="6QXP"/>
<dbReference type="PDBsum" id="6TME"/>
<dbReference type="SMR" id="Q9FZA0"/>
<dbReference type="STRING" id="3702.Q9FZA0"/>
<dbReference type="PaxDb" id="3702-AT1G28270.1"/>
<dbReference type="ProteomicsDB" id="228083"/>
<dbReference type="EnsemblPlants" id="AT1G28270.1">
    <property type="protein sequence ID" value="AT1G28270.1"/>
    <property type="gene ID" value="AT1G28270"/>
</dbReference>
<dbReference type="GeneID" id="839721"/>
<dbReference type="Gramene" id="AT1G28270.1">
    <property type="protein sequence ID" value="AT1G28270.1"/>
    <property type="gene ID" value="AT1G28270"/>
</dbReference>
<dbReference type="KEGG" id="ath:AT1G28270"/>
<dbReference type="Araport" id="AT1G28270"/>
<dbReference type="TAIR" id="AT1G28270">
    <property type="gene designation" value="RALFL4"/>
</dbReference>
<dbReference type="eggNOG" id="ENOG502S8YN">
    <property type="taxonomic scope" value="Eukaryota"/>
</dbReference>
<dbReference type="HOGENOM" id="CLU_127895_0_1_1"/>
<dbReference type="InParanoid" id="Q9FZA0"/>
<dbReference type="OMA" id="RCPFTIM"/>
<dbReference type="OrthoDB" id="1092481at2759"/>
<dbReference type="PhylomeDB" id="Q9FZA0"/>
<dbReference type="PRO" id="PR:Q9FZA0"/>
<dbReference type="Proteomes" id="UP000006548">
    <property type="component" value="Chromosome 1"/>
</dbReference>
<dbReference type="ExpressionAtlas" id="Q9FZA0">
    <property type="expression patterns" value="baseline and differential"/>
</dbReference>
<dbReference type="GO" id="GO:0048046">
    <property type="term" value="C:apoplast"/>
    <property type="evidence" value="ECO:0000250"/>
    <property type="project" value="TAIR"/>
</dbReference>
<dbReference type="GO" id="GO:0005179">
    <property type="term" value="F:hormone activity"/>
    <property type="evidence" value="ECO:0000250"/>
    <property type="project" value="UniProtKB"/>
</dbReference>
<dbReference type="GO" id="GO:0019722">
    <property type="term" value="P:calcium-mediated signaling"/>
    <property type="evidence" value="ECO:0000250"/>
    <property type="project" value="UniProtKB"/>
</dbReference>
<dbReference type="GO" id="GO:0007267">
    <property type="term" value="P:cell-cell signaling"/>
    <property type="evidence" value="ECO:0000250"/>
    <property type="project" value="TAIR"/>
</dbReference>
<dbReference type="GO" id="GO:0080092">
    <property type="term" value="P:regulation of pollen tube growth"/>
    <property type="evidence" value="ECO:0000316"/>
    <property type="project" value="TAIR"/>
</dbReference>
<dbReference type="InterPro" id="IPR008801">
    <property type="entry name" value="RALF"/>
</dbReference>
<dbReference type="PANTHER" id="PTHR33136:SF79">
    <property type="entry name" value="PROTEIN RALF-LIKE 4"/>
    <property type="match status" value="1"/>
</dbReference>
<dbReference type="PANTHER" id="PTHR33136">
    <property type="entry name" value="RAPID ALKALINIZATION FACTOR-LIKE"/>
    <property type="match status" value="1"/>
</dbReference>
<dbReference type="Pfam" id="PF05498">
    <property type="entry name" value="RALF"/>
    <property type="match status" value="1"/>
</dbReference>
<reference key="1">
    <citation type="journal article" date="2000" name="Nature">
        <title>Sequence and analysis of chromosome 1 of the plant Arabidopsis thaliana.</title>
        <authorList>
            <person name="Theologis A."/>
            <person name="Ecker J.R."/>
            <person name="Palm C.J."/>
            <person name="Federspiel N.A."/>
            <person name="Kaul S."/>
            <person name="White O."/>
            <person name="Alonso J."/>
            <person name="Altafi H."/>
            <person name="Araujo R."/>
            <person name="Bowman C.L."/>
            <person name="Brooks S.Y."/>
            <person name="Buehler E."/>
            <person name="Chan A."/>
            <person name="Chao Q."/>
            <person name="Chen H."/>
            <person name="Cheuk R.F."/>
            <person name="Chin C.W."/>
            <person name="Chung M.K."/>
            <person name="Conn L."/>
            <person name="Conway A.B."/>
            <person name="Conway A.R."/>
            <person name="Creasy T.H."/>
            <person name="Dewar K."/>
            <person name="Dunn P."/>
            <person name="Etgu P."/>
            <person name="Feldblyum T.V."/>
            <person name="Feng J.-D."/>
            <person name="Fong B."/>
            <person name="Fujii C.Y."/>
            <person name="Gill J.E."/>
            <person name="Goldsmith A.D."/>
            <person name="Haas B."/>
            <person name="Hansen N.F."/>
            <person name="Hughes B."/>
            <person name="Huizar L."/>
            <person name="Hunter J.L."/>
            <person name="Jenkins J."/>
            <person name="Johnson-Hopson C."/>
            <person name="Khan S."/>
            <person name="Khaykin E."/>
            <person name="Kim C.J."/>
            <person name="Koo H.L."/>
            <person name="Kremenetskaia I."/>
            <person name="Kurtz D.B."/>
            <person name="Kwan A."/>
            <person name="Lam B."/>
            <person name="Langin-Hooper S."/>
            <person name="Lee A."/>
            <person name="Lee J.M."/>
            <person name="Lenz C.A."/>
            <person name="Li J.H."/>
            <person name="Li Y.-P."/>
            <person name="Lin X."/>
            <person name="Liu S.X."/>
            <person name="Liu Z.A."/>
            <person name="Luros J.S."/>
            <person name="Maiti R."/>
            <person name="Marziali A."/>
            <person name="Militscher J."/>
            <person name="Miranda M."/>
            <person name="Nguyen M."/>
            <person name="Nierman W.C."/>
            <person name="Osborne B.I."/>
            <person name="Pai G."/>
            <person name="Peterson J."/>
            <person name="Pham P.K."/>
            <person name="Rizzo M."/>
            <person name="Rooney T."/>
            <person name="Rowley D."/>
            <person name="Sakano H."/>
            <person name="Salzberg S.L."/>
            <person name="Schwartz J.R."/>
            <person name="Shinn P."/>
            <person name="Southwick A.M."/>
            <person name="Sun H."/>
            <person name="Tallon L.J."/>
            <person name="Tambunga G."/>
            <person name="Toriumi M.J."/>
            <person name="Town C.D."/>
            <person name="Utterback T."/>
            <person name="Van Aken S."/>
            <person name="Vaysberg M."/>
            <person name="Vysotskaia V.S."/>
            <person name="Walker M."/>
            <person name="Wu D."/>
            <person name="Yu G."/>
            <person name="Fraser C.M."/>
            <person name="Venter J.C."/>
            <person name="Davis R.W."/>
        </authorList>
    </citation>
    <scope>NUCLEOTIDE SEQUENCE [LARGE SCALE GENOMIC DNA]</scope>
    <source>
        <strain>cv. Columbia</strain>
    </source>
</reference>
<reference key="2">
    <citation type="journal article" date="2017" name="Plant J.">
        <title>Araport11: a complete reannotation of the Arabidopsis thaliana reference genome.</title>
        <authorList>
            <person name="Cheng C.Y."/>
            <person name="Krishnakumar V."/>
            <person name="Chan A.P."/>
            <person name="Thibaud-Nissen F."/>
            <person name="Schobel S."/>
            <person name="Town C.D."/>
        </authorList>
    </citation>
    <scope>GENOME REANNOTATION</scope>
    <source>
        <strain>cv. Columbia</strain>
    </source>
</reference>
<reference key="3">
    <citation type="journal article" date="2003" name="Science">
        <title>Empirical analysis of transcriptional activity in the Arabidopsis genome.</title>
        <authorList>
            <person name="Yamada K."/>
            <person name="Lim J."/>
            <person name="Dale J.M."/>
            <person name="Chen H."/>
            <person name="Shinn P."/>
            <person name="Palm C.J."/>
            <person name="Southwick A.M."/>
            <person name="Wu H.C."/>
            <person name="Kim C.J."/>
            <person name="Nguyen M."/>
            <person name="Pham P.K."/>
            <person name="Cheuk R.F."/>
            <person name="Karlin-Newmann G."/>
            <person name="Liu S.X."/>
            <person name="Lam B."/>
            <person name="Sakano H."/>
            <person name="Wu T."/>
            <person name="Yu G."/>
            <person name="Miranda M."/>
            <person name="Quach H.L."/>
            <person name="Tripp M."/>
            <person name="Chang C.H."/>
            <person name="Lee J.M."/>
            <person name="Toriumi M.J."/>
            <person name="Chan M.M."/>
            <person name="Tang C.C."/>
            <person name="Onodera C.S."/>
            <person name="Deng J.M."/>
            <person name="Akiyama K."/>
            <person name="Ansari Y."/>
            <person name="Arakawa T."/>
            <person name="Banh J."/>
            <person name="Banno F."/>
            <person name="Bowser L."/>
            <person name="Brooks S.Y."/>
            <person name="Carninci P."/>
            <person name="Chao Q."/>
            <person name="Choy N."/>
            <person name="Enju A."/>
            <person name="Goldsmith A.D."/>
            <person name="Gurjal M."/>
            <person name="Hansen N.F."/>
            <person name="Hayashizaki Y."/>
            <person name="Johnson-Hopson C."/>
            <person name="Hsuan V.W."/>
            <person name="Iida K."/>
            <person name="Karnes M."/>
            <person name="Khan S."/>
            <person name="Koesema E."/>
            <person name="Ishida J."/>
            <person name="Jiang P.X."/>
            <person name="Jones T."/>
            <person name="Kawai J."/>
            <person name="Kamiya A."/>
            <person name="Meyers C."/>
            <person name="Nakajima M."/>
            <person name="Narusaka M."/>
            <person name="Seki M."/>
            <person name="Sakurai T."/>
            <person name="Satou M."/>
            <person name="Tamse R."/>
            <person name="Vaysberg M."/>
            <person name="Wallender E.K."/>
            <person name="Wong C."/>
            <person name="Yamamura Y."/>
            <person name="Yuan S."/>
            <person name="Shinozaki K."/>
            <person name="Davis R.W."/>
            <person name="Theologis A."/>
            <person name="Ecker J.R."/>
        </authorList>
    </citation>
    <scope>NUCLEOTIDE SEQUENCE [LARGE SCALE MRNA]</scope>
    <source>
        <strain>cv. Columbia</strain>
    </source>
</reference>
<reference key="4">
    <citation type="submission" date="2006-07" db="EMBL/GenBank/DDBJ databases">
        <title>Large-scale analysis of RIKEN Arabidopsis full-length (RAFL) cDNAs.</title>
        <authorList>
            <person name="Totoki Y."/>
            <person name="Seki M."/>
            <person name="Ishida J."/>
            <person name="Nakajima M."/>
            <person name="Enju A."/>
            <person name="Kamiya A."/>
            <person name="Narusaka M."/>
            <person name="Shin-i T."/>
            <person name="Nakagawa M."/>
            <person name="Sakamoto N."/>
            <person name="Oishi K."/>
            <person name="Kohara Y."/>
            <person name="Kobayashi M."/>
            <person name="Toyoda A."/>
            <person name="Sakaki Y."/>
            <person name="Sakurai T."/>
            <person name="Iida K."/>
            <person name="Akiyama K."/>
            <person name="Satou M."/>
            <person name="Toyoda T."/>
            <person name="Konagaya A."/>
            <person name="Carninci P."/>
            <person name="Kawai J."/>
            <person name="Hayashizaki Y."/>
            <person name="Shinozaki K."/>
        </authorList>
    </citation>
    <scope>NUCLEOTIDE SEQUENCE [LARGE SCALE MRNA]</scope>
    <source>
        <strain>cv. Columbia</strain>
    </source>
</reference>
<reference key="5">
    <citation type="journal article" date="2002" name="In Silico Biol.">
        <title>Peptomics, identification of novel cationic Arabidopsis peptides with conserved sequence motifs.</title>
        <authorList>
            <person name="Olsen A.N."/>
            <person name="Mundy J."/>
            <person name="Skriver K."/>
        </authorList>
    </citation>
    <scope>GENE FAMILY</scope>
    <scope>NOMENCLATURE</scope>
</reference>
<proteinExistence type="evidence at protein level"/>